<comment type="function">
    <text evidence="1">This is one of the proteins that binds to the 5S RNA in the ribosome where it forms part of the central protuberance.</text>
</comment>
<comment type="subunit">
    <text evidence="1">Part of the 50S ribosomal subunit; part of the 5S rRNA/L5/L18/L25 subcomplex. Contacts the 5S rRNA. Binds to the 5S rRNA independently of L5 and L18.</text>
</comment>
<comment type="similarity">
    <text evidence="1">Belongs to the bacterial ribosomal protein bL25 family. CTC subfamily.</text>
</comment>
<accession>B2S6Z6</accession>
<dbReference type="EMBL" id="CP000887">
    <property type="protein sequence ID" value="ACD72943.1"/>
    <property type="molecule type" value="Genomic_DNA"/>
</dbReference>
<dbReference type="RefSeq" id="WP_002964640.1">
    <property type="nucleotide sequence ID" value="NC_010742.1"/>
</dbReference>
<dbReference type="SMR" id="B2S6Z6"/>
<dbReference type="KEGG" id="bmc:BAbS19_I14500"/>
<dbReference type="HOGENOM" id="CLU_075939_0_0_5"/>
<dbReference type="Proteomes" id="UP000002565">
    <property type="component" value="Chromosome 1"/>
</dbReference>
<dbReference type="GO" id="GO:0022625">
    <property type="term" value="C:cytosolic large ribosomal subunit"/>
    <property type="evidence" value="ECO:0007669"/>
    <property type="project" value="TreeGrafter"/>
</dbReference>
<dbReference type="GO" id="GO:0008097">
    <property type="term" value="F:5S rRNA binding"/>
    <property type="evidence" value="ECO:0007669"/>
    <property type="project" value="InterPro"/>
</dbReference>
<dbReference type="GO" id="GO:0003735">
    <property type="term" value="F:structural constituent of ribosome"/>
    <property type="evidence" value="ECO:0007669"/>
    <property type="project" value="InterPro"/>
</dbReference>
<dbReference type="GO" id="GO:0006412">
    <property type="term" value="P:translation"/>
    <property type="evidence" value="ECO:0007669"/>
    <property type="project" value="UniProtKB-UniRule"/>
</dbReference>
<dbReference type="CDD" id="cd00495">
    <property type="entry name" value="Ribosomal_L25_TL5_CTC"/>
    <property type="match status" value="1"/>
</dbReference>
<dbReference type="Gene3D" id="2.170.120.20">
    <property type="entry name" value="Ribosomal protein L25, beta domain"/>
    <property type="match status" value="1"/>
</dbReference>
<dbReference type="Gene3D" id="2.40.240.10">
    <property type="entry name" value="Ribosomal Protein L25, Chain P"/>
    <property type="match status" value="1"/>
</dbReference>
<dbReference type="HAMAP" id="MF_01334">
    <property type="entry name" value="Ribosomal_bL25_CTC"/>
    <property type="match status" value="1"/>
</dbReference>
<dbReference type="InterPro" id="IPR020056">
    <property type="entry name" value="Rbsml_bL25/Gln-tRNA_synth_N"/>
</dbReference>
<dbReference type="InterPro" id="IPR011035">
    <property type="entry name" value="Ribosomal_bL25/Gln-tRNA_synth"/>
</dbReference>
<dbReference type="InterPro" id="IPR020057">
    <property type="entry name" value="Ribosomal_bL25_b-dom"/>
</dbReference>
<dbReference type="InterPro" id="IPR037121">
    <property type="entry name" value="Ribosomal_bL25_C"/>
</dbReference>
<dbReference type="InterPro" id="IPR001021">
    <property type="entry name" value="Ribosomal_bL25_long"/>
</dbReference>
<dbReference type="InterPro" id="IPR029751">
    <property type="entry name" value="Ribosomal_L25_dom"/>
</dbReference>
<dbReference type="InterPro" id="IPR020930">
    <property type="entry name" value="Ribosomal_uL5_bac-type"/>
</dbReference>
<dbReference type="NCBIfam" id="TIGR00731">
    <property type="entry name" value="bL25_bact_ctc"/>
    <property type="match status" value="1"/>
</dbReference>
<dbReference type="NCBIfam" id="NF004128">
    <property type="entry name" value="PRK05618.1-2"/>
    <property type="match status" value="1"/>
</dbReference>
<dbReference type="NCBIfam" id="NF004612">
    <property type="entry name" value="PRK05943.1"/>
    <property type="match status" value="1"/>
</dbReference>
<dbReference type="PANTHER" id="PTHR33284">
    <property type="entry name" value="RIBOSOMAL PROTEIN L25/GLN-TRNA SYNTHETASE, ANTI-CODON-BINDING DOMAIN-CONTAINING PROTEIN"/>
    <property type="match status" value="1"/>
</dbReference>
<dbReference type="PANTHER" id="PTHR33284:SF1">
    <property type="entry name" value="RIBOSOMAL PROTEIN L25_GLN-TRNA SYNTHETASE, ANTI-CODON-BINDING DOMAIN-CONTAINING PROTEIN"/>
    <property type="match status" value="1"/>
</dbReference>
<dbReference type="Pfam" id="PF01386">
    <property type="entry name" value="Ribosomal_L25p"/>
    <property type="match status" value="1"/>
</dbReference>
<dbReference type="Pfam" id="PF14693">
    <property type="entry name" value="Ribosomal_TL5_C"/>
    <property type="match status" value="1"/>
</dbReference>
<dbReference type="SUPFAM" id="SSF50715">
    <property type="entry name" value="Ribosomal protein L25-like"/>
    <property type="match status" value="1"/>
</dbReference>
<organism>
    <name type="scientific">Brucella abortus (strain S19)</name>
    <dbReference type="NCBI Taxonomy" id="430066"/>
    <lineage>
        <taxon>Bacteria</taxon>
        <taxon>Pseudomonadati</taxon>
        <taxon>Pseudomonadota</taxon>
        <taxon>Alphaproteobacteria</taxon>
        <taxon>Hyphomicrobiales</taxon>
        <taxon>Brucellaceae</taxon>
        <taxon>Brucella/Ochrobactrum group</taxon>
        <taxon>Brucella</taxon>
    </lineage>
</organism>
<feature type="chain" id="PRO_1000142494" description="Large ribosomal subunit protein bL25">
    <location>
        <begin position="1"/>
        <end position="207"/>
    </location>
</feature>
<reference key="1">
    <citation type="journal article" date="2008" name="PLoS ONE">
        <title>Genome sequence of Brucella abortus vaccine strain S19 compared to virulent strains yields candidate virulence genes.</title>
        <authorList>
            <person name="Crasta O.R."/>
            <person name="Folkerts O."/>
            <person name="Fei Z."/>
            <person name="Mane S.P."/>
            <person name="Evans C."/>
            <person name="Martino-Catt S."/>
            <person name="Bricker B."/>
            <person name="Yu G."/>
            <person name="Du L."/>
            <person name="Sobral B.W."/>
        </authorList>
    </citation>
    <scope>NUCLEOTIDE SEQUENCE [LARGE SCALE GENOMIC DNA]</scope>
    <source>
        <strain>S19</strain>
    </source>
</reference>
<gene>
    <name evidence="1" type="primary">rplY</name>
    <name evidence="1" type="synonym">ctc</name>
    <name type="ordered locus">BAbS19_I14500</name>
</gene>
<protein>
    <recommendedName>
        <fullName evidence="1">Large ribosomal subunit protein bL25</fullName>
    </recommendedName>
    <alternativeName>
        <fullName evidence="2">50S ribosomal protein L25</fullName>
    </alternativeName>
    <alternativeName>
        <fullName evidence="1">General stress protein CTC</fullName>
    </alternativeName>
</protein>
<proteinExistence type="inferred from homology"/>
<evidence type="ECO:0000255" key="1">
    <source>
        <dbReference type="HAMAP-Rule" id="MF_01334"/>
    </source>
</evidence>
<evidence type="ECO:0000305" key="2"/>
<keyword id="KW-0687">Ribonucleoprotein</keyword>
<keyword id="KW-0689">Ribosomal protein</keyword>
<keyword id="KW-0694">RNA-binding</keyword>
<keyword id="KW-0699">rRNA-binding</keyword>
<sequence length="207" mass="22383">MSETYVLKADLRTRVGKGSSRELRRNGQIPAVIYGDKQEPLAIAVSYKEIFYKIHGGGFKTTVATIEVDGKKIQVLPKDYQLDPVRDFPQHVDFLRVSAKSVVHVNVPVHFKNEEAAPGIKRGGVLNVVRHDVELIVPANAIPEALEIDLSGLEIGDSVHISAVKLPKGATPAIQDRDFTIATIAAPAGLKSEENAEGAAEEAKDGE</sequence>
<name>RL25_BRUA1</name>